<gene>
    <name evidence="7" type="primary">tcmJ</name>
</gene>
<comment type="function">
    <text evidence="3 4 6">Involved in the biosynthesis of tetracenomycin C (TCM C) (PubMed:8244926, PubMed:9609708). Part of a type II polyketide synthase (PKS) that catalyzes the synthesis of tetracenomycin F2 (TCM F2), a precursor of TCM C, from malonyl-CoA (PubMed:8248801). TcmJ, while not absolutely required, greatly increases the tetracenomycin F2 production (PubMed:8244926, PubMed:8248801, PubMed:9609708). It probably acts as a cyclase (PubMed:8244926, PubMed:8248801).</text>
</comment>
<comment type="catalytic activity">
    <reaction evidence="9">
        <text>10 malonyl-CoA + 8 H(+) = tetracenomycin F2 + 10 CO2 + 10 CoA + 2 H2O</text>
        <dbReference type="Rhea" id="RHEA:21348"/>
        <dbReference type="ChEBI" id="CHEBI:15377"/>
        <dbReference type="ChEBI" id="CHEBI:15378"/>
        <dbReference type="ChEBI" id="CHEBI:16526"/>
        <dbReference type="ChEBI" id="CHEBI:57287"/>
        <dbReference type="ChEBI" id="CHEBI:57384"/>
        <dbReference type="ChEBI" id="CHEBI:77982"/>
        <dbReference type="EC" id="2.3.1.235"/>
    </reaction>
    <physiologicalReaction direction="left-to-right" evidence="9">
        <dbReference type="Rhea" id="RHEA:21349"/>
    </physiologicalReaction>
</comment>
<comment type="pathway">
    <text evidence="3">Antibiotic biosynthesis; tetracenomycin C biosynthesis.</text>
</comment>
<comment type="subunit">
    <text evidence="4 5">The tetracenomycin polyketide synthase (TCM PKS) is composed of a ketosynthase complex (TcmKL), an acyl carrier protein (TcmM), a cyclase (TcmN) and a probable second cyclase (TcmJ).</text>
</comment>
<comment type="disruption phenotype">
    <text evidence="3">Deletion mutant can still produce tetracenomycin C, but at a reduced level.</text>
</comment>
<proteinExistence type="evidence at protein level"/>
<keyword id="KW-0045">Antibiotic biosynthesis</keyword>
<keyword id="KW-0808">Transferase</keyword>
<sequence length="149" mass="15906">MTTAQHEGEQTVAAAAKIAMSSVAPSHRQGGSTRALLTPSSVGATSGFLGHIELAPGESVTEHYHPFSDKYLYLIEGSLVVRVNGEEVRLERDEALFVTRGQRHRIENRGNVPARVVFQISPLAPRPELGHVDTEPVPNPAAAPPKVGG</sequence>
<organism>
    <name type="scientific">Streptomyces glaucescens</name>
    <dbReference type="NCBI Taxonomy" id="1907"/>
    <lineage>
        <taxon>Bacteria</taxon>
        <taxon>Bacillati</taxon>
        <taxon>Actinomycetota</taxon>
        <taxon>Actinomycetes</taxon>
        <taxon>Kitasatosporales</taxon>
        <taxon>Streptomycetaceae</taxon>
        <taxon>Streptomyces</taxon>
    </lineage>
</organism>
<accession>P16558</accession>
<reference key="1">
    <citation type="journal article" date="1993" name="J. Bacteriol.">
        <title>The tcmVI region of the tetracenomycin C biosynthetic gene cluster of Streptomyces glaucescens encodes the tetracenomycin F1 monooxygenase, tetracenomycin F2 cyclase, and, most likely, a second cyclase.</title>
        <authorList>
            <person name="Summers R.G."/>
            <person name="Wendt-Pienkowski E."/>
            <person name="Motamedi H."/>
            <person name="Hutchinson C.R."/>
        </authorList>
    </citation>
    <scope>NUCLEOTIDE SEQUENCE [GENOMIC DNA]</scope>
    <scope>FUNCTION</scope>
    <scope>PATHWAY</scope>
    <scope>DISRUPTION PHENOTYPE</scope>
    <source>
        <strain>DSM 40716 / ETH 22794 / Tue 49</strain>
    </source>
</reference>
<reference key="2">
    <citation type="journal article" date="1989" name="EMBO J.">
        <title>Analysis of the nucleotide sequence of the Streptomyces glaucescens tcmI genes provides key information about the enzymology of polyketide antibiotic biosynthesis.</title>
        <authorList>
            <person name="Bibb M.J."/>
            <person name="Biro S."/>
            <person name="Motamedi H."/>
            <person name="Collins J.F."/>
            <person name="Hutchinson C.R."/>
        </authorList>
    </citation>
    <scope>NUCLEOTIDE SEQUENCE [GENOMIC DNA] OF 120-149</scope>
    <source>
        <strain>DSM 40716 / ETH 22794 / Tue 49</strain>
    </source>
</reference>
<reference key="3">
    <citation type="journal article" date="1993" name="Science">
        <title>Enzymatic synthesis of a bacterial polyketide from acetyl and malonyl coenzyme A.</title>
        <authorList>
            <person name="Shen B."/>
            <person name="Hutchinson C.R."/>
        </authorList>
    </citation>
    <scope>FUNCTION</scope>
    <scope>SUBUNIT</scope>
    <source>
        <strain>DSM 40716 / ETH 22794 / Tue 49</strain>
    </source>
</reference>
<reference key="4">
    <citation type="journal article" date="1996" name="Proc. Natl. Acad. Sci. U.S.A.">
        <title>Deciphering the mechanism for the assembly of aromatic polyketides by a bacterial polyketide synthase.</title>
        <authorList>
            <person name="Shen B."/>
            <person name="Hutchinson C.R."/>
        </authorList>
    </citation>
    <scope>SUBUNIT</scope>
    <source>
        <strain>DSM 40716 / ETH 22794 / Tue 49</strain>
    </source>
</reference>
<reference key="5">
    <citation type="journal article" date="1998" name="Biochemistry">
        <title>Reconstitution of the iterative type II polyketide synthase for tetracenomycin F2 biosynthesis.</title>
        <authorList>
            <person name="Bao W."/>
            <person name="Wendt-Pienkowski E."/>
            <person name="Hutchinson C.R."/>
        </authorList>
    </citation>
    <scope>FUNCTION</scope>
    <source>
        <strain>DSM 40716 / ETH 22794 / Tue 49</strain>
    </source>
</reference>
<evidence type="ECO:0000255" key="1"/>
<evidence type="ECO:0000256" key="2">
    <source>
        <dbReference type="SAM" id="MobiDB-lite"/>
    </source>
</evidence>
<evidence type="ECO:0000269" key="3">
    <source>
    </source>
</evidence>
<evidence type="ECO:0000269" key="4">
    <source>
    </source>
</evidence>
<evidence type="ECO:0000269" key="5">
    <source>
    </source>
</evidence>
<evidence type="ECO:0000269" key="6">
    <source>
    </source>
</evidence>
<evidence type="ECO:0000303" key="7">
    <source>
    </source>
</evidence>
<evidence type="ECO:0000305" key="8"/>
<evidence type="ECO:0000305" key="9">
    <source>
    </source>
</evidence>
<feature type="chain" id="PRO_0000072455" description="Tetracenomycin polyketide synthase protein TcmJ">
    <location>
        <begin position="1"/>
        <end position="149"/>
    </location>
</feature>
<feature type="domain" description="Cupin type-2" evidence="1">
    <location>
        <begin position="51"/>
        <end position="117"/>
    </location>
</feature>
<feature type="region of interest" description="Disordered" evidence="2">
    <location>
        <begin position="127"/>
        <end position="149"/>
    </location>
</feature>
<dbReference type="EC" id="2.3.1.235" evidence="9"/>
<dbReference type="EMBL" id="M80674">
    <property type="protein sequence ID" value="AAA67514.1"/>
    <property type="molecule type" value="Genomic_DNA"/>
</dbReference>
<dbReference type="EMBL" id="X15312">
    <property type="protein sequence ID" value="CAA33368.1"/>
    <property type="molecule type" value="Genomic_DNA"/>
</dbReference>
<dbReference type="PIR" id="C53291">
    <property type="entry name" value="C53291"/>
</dbReference>
<dbReference type="PIR" id="S27692">
    <property type="entry name" value="S27692"/>
</dbReference>
<dbReference type="SMR" id="P16558"/>
<dbReference type="STRING" id="1907.SGLAU_26350"/>
<dbReference type="eggNOG" id="COG0662">
    <property type="taxonomic scope" value="Bacteria"/>
</dbReference>
<dbReference type="BioCyc" id="MetaCyc:MONOMER-18609"/>
<dbReference type="UniPathway" id="UPA00174"/>
<dbReference type="GO" id="GO:0016740">
    <property type="term" value="F:transferase activity"/>
    <property type="evidence" value="ECO:0007669"/>
    <property type="project" value="UniProtKB-KW"/>
</dbReference>
<dbReference type="GO" id="GO:0017000">
    <property type="term" value="P:antibiotic biosynthetic process"/>
    <property type="evidence" value="ECO:0007669"/>
    <property type="project" value="UniProtKB-KW"/>
</dbReference>
<dbReference type="CDD" id="cd06991">
    <property type="entry name" value="cupin_TcmJ-like"/>
    <property type="match status" value="1"/>
</dbReference>
<dbReference type="Gene3D" id="2.60.120.10">
    <property type="entry name" value="Jelly Rolls"/>
    <property type="match status" value="1"/>
</dbReference>
<dbReference type="InterPro" id="IPR013096">
    <property type="entry name" value="Cupin_2"/>
</dbReference>
<dbReference type="InterPro" id="IPR052044">
    <property type="entry name" value="PKS_Associated_Protein"/>
</dbReference>
<dbReference type="InterPro" id="IPR016672">
    <property type="entry name" value="Polyketide_Synth_CurC_prd"/>
</dbReference>
<dbReference type="InterPro" id="IPR014710">
    <property type="entry name" value="RmlC-like_jellyroll"/>
</dbReference>
<dbReference type="InterPro" id="IPR011051">
    <property type="entry name" value="RmlC_Cupin_sf"/>
</dbReference>
<dbReference type="PANTHER" id="PTHR36114">
    <property type="entry name" value="16.7 KDA PROTEIN IN WHIE LOCUS"/>
    <property type="match status" value="1"/>
</dbReference>
<dbReference type="PANTHER" id="PTHR36114:SF1">
    <property type="entry name" value="16.7 KDA PROTEIN IN WHIE LOCUS"/>
    <property type="match status" value="1"/>
</dbReference>
<dbReference type="Pfam" id="PF07883">
    <property type="entry name" value="Cupin_2"/>
    <property type="match status" value="1"/>
</dbReference>
<dbReference type="PIRSF" id="PIRSF016602">
    <property type="entry name" value="CurC_prd"/>
    <property type="match status" value="1"/>
</dbReference>
<dbReference type="SUPFAM" id="SSF51182">
    <property type="entry name" value="RmlC-like cupins"/>
    <property type="match status" value="1"/>
</dbReference>
<protein>
    <recommendedName>
        <fullName evidence="8">Tetracenomycin polyketide synthase protein TcmJ</fullName>
        <ecNumber evidence="9">2.3.1.235</ecNumber>
    </recommendedName>
    <alternativeName>
        <fullName evidence="8">TCM PKS</fullName>
    </alternativeName>
</protein>
<name>TCMJ_STRGA</name>